<gene>
    <name evidence="1" type="primary">ilvC</name>
    <name type="ordered locus">GSU1909</name>
</gene>
<reference key="1">
    <citation type="journal article" date="2003" name="Science">
        <title>Genome of Geobacter sulfurreducens: metal reduction in subsurface environments.</title>
        <authorList>
            <person name="Methe B.A."/>
            <person name="Nelson K.E."/>
            <person name="Eisen J.A."/>
            <person name="Paulsen I.T."/>
            <person name="Nelson W.C."/>
            <person name="Heidelberg J.F."/>
            <person name="Wu D."/>
            <person name="Wu M."/>
            <person name="Ward N.L."/>
            <person name="Beanan M.J."/>
            <person name="Dodson R.J."/>
            <person name="Madupu R."/>
            <person name="Brinkac L.M."/>
            <person name="Daugherty S.C."/>
            <person name="DeBoy R.T."/>
            <person name="Durkin A.S."/>
            <person name="Gwinn M.L."/>
            <person name="Kolonay J.F."/>
            <person name="Sullivan S.A."/>
            <person name="Haft D.H."/>
            <person name="Selengut J."/>
            <person name="Davidsen T.M."/>
            <person name="Zafar N."/>
            <person name="White O."/>
            <person name="Tran B."/>
            <person name="Romero C."/>
            <person name="Forberger H.A."/>
            <person name="Weidman J.F."/>
            <person name="Khouri H.M."/>
            <person name="Feldblyum T.V."/>
            <person name="Utterback T.R."/>
            <person name="Van Aken S.E."/>
            <person name="Lovley D.R."/>
            <person name="Fraser C.M."/>
        </authorList>
    </citation>
    <scope>NUCLEOTIDE SEQUENCE [LARGE SCALE GENOMIC DNA]</scope>
    <source>
        <strain>ATCC 51573 / DSM 12127 / PCA</strain>
    </source>
</reference>
<feature type="chain" id="PRO_0000151312" description="Ketol-acid reductoisomerase (NADP(+))">
    <location>
        <begin position="1"/>
        <end position="338"/>
    </location>
</feature>
<feature type="domain" description="KARI N-terminal Rossmann" evidence="2">
    <location>
        <begin position="1"/>
        <end position="181"/>
    </location>
</feature>
<feature type="domain" description="KARI C-terminal knotted" evidence="3">
    <location>
        <begin position="182"/>
        <end position="327"/>
    </location>
</feature>
<feature type="active site" evidence="1">
    <location>
        <position position="107"/>
    </location>
</feature>
<feature type="binding site" evidence="1">
    <location>
        <begin position="24"/>
        <end position="27"/>
    </location>
    <ligand>
        <name>NADP(+)</name>
        <dbReference type="ChEBI" id="CHEBI:58349"/>
    </ligand>
</feature>
<feature type="binding site" evidence="1">
    <location>
        <position position="47"/>
    </location>
    <ligand>
        <name>NADP(+)</name>
        <dbReference type="ChEBI" id="CHEBI:58349"/>
    </ligand>
</feature>
<feature type="binding site" evidence="1">
    <location>
        <position position="50"/>
    </location>
    <ligand>
        <name>NADP(+)</name>
        <dbReference type="ChEBI" id="CHEBI:58349"/>
    </ligand>
</feature>
<feature type="binding site" evidence="1">
    <location>
        <position position="52"/>
    </location>
    <ligand>
        <name>NADP(+)</name>
        <dbReference type="ChEBI" id="CHEBI:58349"/>
    </ligand>
</feature>
<feature type="binding site" evidence="1">
    <location>
        <begin position="82"/>
        <end position="85"/>
    </location>
    <ligand>
        <name>NADP(+)</name>
        <dbReference type="ChEBI" id="CHEBI:58349"/>
    </ligand>
</feature>
<feature type="binding site" evidence="1">
    <location>
        <position position="133"/>
    </location>
    <ligand>
        <name>NADP(+)</name>
        <dbReference type="ChEBI" id="CHEBI:58349"/>
    </ligand>
</feature>
<feature type="binding site" evidence="1">
    <location>
        <position position="190"/>
    </location>
    <ligand>
        <name>Mg(2+)</name>
        <dbReference type="ChEBI" id="CHEBI:18420"/>
        <label>1</label>
    </ligand>
</feature>
<feature type="binding site" evidence="1">
    <location>
        <position position="190"/>
    </location>
    <ligand>
        <name>Mg(2+)</name>
        <dbReference type="ChEBI" id="CHEBI:18420"/>
        <label>2</label>
    </ligand>
</feature>
<feature type="binding site" evidence="1">
    <location>
        <position position="194"/>
    </location>
    <ligand>
        <name>Mg(2+)</name>
        <dbReference type="ChEBI" id="CHEBI:18420"/>
        <label>1</label>
    </ligand>
</feature>
<feature type="binding site" evidence="1">
    <location>
        <position position="226"/>
    </location>
    <ligand>
        <name>Mg(2+)</name>
        <dbReference type="ChEBI" id="CHEBI:18420"/>
        <label>2</label>
    </ligand>
</feature>
<feature type="binding site" evidence="1">
    <location>
        <position position="230"/>
    </location>
    <ligand>
        <name>Mg(2+)</name>
        <dbReference type="ChEBI" id="CHEBI:18420"/>
        <label>2</label>
    </ligand>
</feature>
<feature type="binding site" evidence="1">
    <location>
        <position position="251"/>
    </location>
    <ligand>
        <name>substrate</name>
    </ligand>
</feature>
<dbReference type="EC" id="1.1.1.86" evidence="1"/>
<dbReference type="EMBL" id="AE017180">
    <property type="protein sequence ID" value="AAR35285.1"/>
    <property type="molecule type" value="Genomic_DNA"/>
</dbReference>
<dbReference type="RefSeq" id="NP_952958.1">
    <property type="nucleotide sequence ID" value="NC_002939.5"/>
</dbReference>
<dbReference type="RefSeq" id="WP_010942554.1">
    <property type="nucleotide sequence ID" value="NC_002939.5"/>
</dbReference>
<dbReference type="SMR" id="Q74BW9"/>
<dbReference type="FunCoup" id="Q74BW9">
    <property type="interactions" value="515"/>
</dbReference>
<dbReference type="STRING" id="243231.GSU1909"/>
<dbReference type="EnsemblBacteria" id="AAR35285">
    <property type="protein sequence ID" value="AAR35285"/>
    <property type="gene ID" value="GSU1909"/>
</dbReference>
<dbReference type="KEGG" id="gsu:GSU1909"/>
<dbReference type="PATRIC" id="fig|243231.5.peg.1947"/>
<dbReference type="eggNOG" id="COG0059">
    <property type="taxonomic scope" value="Bacteria"/>
</dbReference>
<dbReference type="HOGENOM" id="CLU_033821_0_1_7"/>
<dbReference type="InParanoid" id="Q74BW9"/>
<dbReference type="OrthoDB" id="9804088at2"/>
<dbReference type="UniPathway" id="UPA00047">
    <property type="reaction ID" value="UER00056"/>
</dbReference>
<dbReference type="UniPathway" id="UPA00049">
    <property type="reaction ID" value="UER00060"/>
</dbReference>
<dbReference type="Proteomes" id="UP000000577">
    <property type="component" value="Chromosome"/>
</dbReference>
<dbReference type="GO" id="GO:0005829">
    <property type="term" value="C:cytosol"/>
    <property type="evidence" value="ECO:0000318"/>
    <property type="project" value="GO_Central"/>
</dbReference>
<dbReference type="GO" id="GO:0004455">
    <property type="term" value="F:ketol-acid reductoisomerase activity"/>
    <property type="evidence" value="ECO:0000318"/>
    <property type="project" value="GO_Central"/>
</dbReference>
<dbReference type="GO" id="GO:0000287">
    <property type="term" value="F:magnesium ion binding"/>
    <property type="evidence" value="ECO:0007669"/>
    <property type="project" value="UniProtKB-UniRule"/>
</dbReference>
<dbReference type="GO" id="GO:0050661">
    <property type="term" value="F:NADP binding"/>
    <property type="evidence" value="ECO:0007669"/>
    <property type="project" value="InterPro"/>
</dbReference>
<dbReference type="GO" id="GO:0009097">
    <property type="term" value="P:isoleucine biosynthetic process"/>
    <property type="evidence" value="ECO:0000318"/>
    <property type="project" value="GO_Central"/>
</dbReference>
<dbReference type="GO" id="GO:0009099">
    <property type="term" value="P:L-valine biosynthetic process"/>
    <property type="evidence" value="ECO:0000318"/>
    <property type="project" value="GO_Central"/>
</dbReference>
<dbReference type="FunFam" id="3.40.50.720:FF:000023">
    <property type="entry name" value="Ketol-acid reductoisomerase (NADP(+))"/>
    <property type="match status" value="1"/>
</dbReference>
<dbReference type="Gene3D" id="6.10.240.10">
    <property type="match status" value="1"/>
</dbReference>
<dbReference type="Gene3D" id="3.40.50.720">
    <property type="entry name" value="NAD(P)-binding Rossmann-like Domain"/>
    <property type="match status" value="1"/>
</dbReference>
<dbReference type="HAMAP" id="MF_00435">
    <property type="entry name" value="IlvC"/>
    <property type="match status" value="1"/>
</dbReference>
<dbReference type="InterPro" id="IPR008927">
    <property type="entry name" value="6-PGluconate_DH-like_C_sf"/>
</dbReference>
<dbReference type="InterPro" id="IPR013023">
    <property type="entry name" value="KARI"/>
</dbReference>
<dbReference type="InterPro" id="IPR000506">
    <property type="entry name" value="KARI_C"/>
</dbReference>
<dbReference type="InterPro" id="IPR013116">
    <property type="entry name" value="KARI_N"/>
</dbReference>
<dbReference type="InterPro" id="IPR014359">
    <property type="entry name" value="KARI_prok"/>
</dbReference>
<dbReference type="InterPro" id="IPR036291">
    <property type="entry name" value="NAD(P)-bd_dom_sf"/>
</dbReference>
<dbReference type="NCBIfam" id="TIGR00465">
    <property type="entry name" value="ilvC"/>
    <property type="match status" value="1"/>
</dbReference>
<dbReference type="NCBIfam" id="NF004017">
    <property type="entry name" value="PRK05479.1"/>
    <property type="match status" value="1"/>
</dbReference>
<dbReference type="NCBIfam" id="NF009940">
    <property type="entry name" value="PRK13403.1"/>
    <property type="match status" value="1"/>
</dbReference>
<dbReference type="PANTHER" id="PTHR21371">
    <property type="entry name" value="KETOL-ACID REDUCTOISOMERASE, MITOCHONDRIAL"/>
    <property type="match status" value="1"/>
</dbReference>
<dbReference type="PANTHER" id="PTHR21371:SF1">
    <property type="entry name" value="KETOL-ACID REDUCTOISOMERASE, MITOCHONDRIAL"/>
    <property type="match status" value="1"/>
</dbReference>
<dbReference type="Pfam" id="PF01450">
    <property type="entry name" value="KARI_C"/>
    <property type="match status" value="1"/>
</dbReference>
<dbReference type="Pfam" id="PF07991">
    <property type="entry name" value="KARI_N"/>
    <property type="match status" value="1"/>
</dbReference>
<dbReference type="PIRSF" id="PIRSF000116">
    <property type="entry name" value="IlvC_gammaproteo"/>
    <property type="match status" value="1"/>
</dbReference>
<dbReference type="SUPFAM" id="SSF48179">
    <property type="entry name" value="6-phosphogluconate dehydrogenase C-terminal domain-like"/>
    <property type="match status" value="1"/>
</dbReference>
<dbReference type="SUPFAM" id="SSF51735">
    <property type="entry name" value="NAD(P)-binding Rossmann-fold domains"/>
    <property type="match status" value="1"/>
</dbReference>
<dbReference type="PROSITE" id="PS51851">
    <property type="entry name" value="KARI_C"/>
    <property type="match status" value="1"/>
</dbReference>
<dbReference type="PROSITE" id="PS51850">
    <property type="entry name" value="KARI_N"/>
    <property type="match status" value="1"/>
</dbReference>
<keyword id="KW-0028">Amino-acid biosynthesis</keyword>
<keyword id="KW-0100">Branched-chain amino acid biosynthesis</keyword>
<keyword id="KW-0460">Magnesium</keyword>
<keyword id="KW-0479">Metal-binding</keyword>
<keyword id="KW-0521">NADP</keyword>
<keyword id="KW-0560">Oxidoreductase</keyword>
<keyword id="KW-1185">Reference proteome</keyword>
<sequence>MKIYYDKDCNQSVLKGKRVAVIGYGSQGHAHANNLKDSGVDVVVGLKADSSSVAKATGAGLTVLPTADAVKGADVVMILLPDEIQGDVYREEVGPYLKQGAYLAFGHGFNIHFGQITPRPDINVIMAAPKGPGHLVRHEYTRGGGVPCLIAIHHDPSGNSRDVALAYASAIGGGRAGIIETSFKEETETDLFGEQAVLCGGISALIQAGFETLVEAGYSPEMAYFECLHETKLIVDLIYEGGIANMRYSISNTAEYGDLTRGPRVITDETKKEMKQILWEIQSGQFAKEWMLENKANKPTFNALRRKGMEHPIEDVGARLRSMMSWIGSSKIVDKSKN</sequence>
<evidence type="ECO:0000255" key="1">
    <source>
        <dbReference type="HAMAP-Rule" id="MF_00435"/>
    </source>
</evidence>
<evidence type="ECO:0000255" key="2">
    <source>
        <dbReference type="PROSITE-ProRule" id="PRU01197"/>
    </source>
</evidence>
<evidence type="ECO:0000255" key="3">
    <source>
        <dbReference type="PROSITE-ProRule" id="PRU01198"/>
    </source>
</evidence>
<accession>Q74BW9</accession>
<comment type="function">
    <text evidence="1">Involved in the biosynthesis of branched-chain amino acids (BCAA). Catalyzes an alkyl-migration followed by a ketol-acid reduction of (S)-2-acetolactate (S2AL) to yield (R)-2,3-dihydroxy-isovalerate. In the isomerase reaction, S2AL is rearranged via a Mg-dependent methyl migration to produce 3-hydroxy-3-methyl-2-ketobutyrate (HMKB). In the reductase reaction, this 2-ketoacid undergoes a metal-dependent reduction by NADPH to yield (R)-2,3-dihydroxy-isovalerate.</text>
</comment>
<comment type="catalytic activity">
    <reaction evidence="1">
        <text>(2R)-2,3-dihydroxy-3-methylbutanoate + NADP(+) = (2S)-2-acetolactate + NADPH + H(+)</text>
        <dbReference type="Rhea" id="RHEA:22068"/>
        <dbReference type="ChEBI" id="CHEBI:15378"/>
        <dbReference type="ChEBI" id="CHEBI:49072"/>
        <dbReference type="ChEBI" id="CHEBI:57783"/>
        <dbReference type="ChEBI" id="CHEBI:58349"/>
        <dbReference type="ChEBI" id="CHEBI:58476"/>
        <dbReference type="EC" id="1.1.1.86"/>
    </reaction>
</comment>
<comment type="catalytic activity">
    <reaction evidence="1">
        <text>(2R,3R)-2,3-dihydroxy-3-methylpentanoate + NADP(+) = (S)-2-ethyl-2-hydroxy-3-oxobutanoate + NADPH + H(+)</text>
        <dbReference type="Rhea" id="RHEA:13493"/>
        <dbReference type="ChEBI" id="CHEBI:15378"/>
        <dbReference type="ChEBI" id="CHEBI:49256"/>
        <dbReference type="ChEBI" id="CHEBI:49258"/>
        <dbReference type="ChEBI" id="CHEBI:57783"/>
        <dbReference type="ChEBI" id="CHEBI:58349"/>
        <dbReference type="EC" id="1.1.1.86"/>
    </reaction>
</comment>
<comment type="cofactor">
    <cofactor evidence="1">
        <name>Mg(2+)</name>
        <dbReference type="ChEBI" id="CHEBI:18420"/>
    </cofactor>
    <text evidence="1">Binds 2 magnesium ions per subunit.</text>
</comment>
<comment type="pathway">
    <text evidence="1">Amino-acid biosynthesis; L-isoleucine biosynthesis; L-isoleucine from 2-oxobutanoate: step 2/4.</text>
</comment>
<comment type="pathway">
    <text evidence="1">Amino-acid biosynthesis; L-valine biosynthesis; L-valine from pyruvate: step 2/4.</text>
</comment>
<comment type="similarity">
    <text evidence="1">Belongs to the ketol-acid reductoisomerase family.</text>
</comment>
<protein>
    <recommendedName>
        <fullName evidence="1">Ketol-acid reductoisomerase (NADP(+))</fullName>
        <shortName evidence="1">KARI</shortName>
        <ecNumber evidence="1">1.1.1.86</ecNumber>
    </recommendedName>
    <alternativeName>
        <fullName evidence="1">Acetohydroxy-acid isomeroreductase</fullName>
        <shortName evidence="1">AHIR</shortName>
    </alternativeName>
    <alternativeName>
        <fullName evidence="1">Alpha-keto-beta-hydroxylacyl reductoisomerase</fullName>
    </alternativeName>
    <alternativeName>
        <fullName evidence="1">Ketol-acid reductoisomerase type 1</fullName>
    </alternativeName>
    <alternativeName>
        <fullName evidence="1">Ketol-acid reductoisomerase type I</fullName>
    </alternativeName>
</protein>
<proteinExistence type="inferred from homology"/>
<name>ILVC_GEOSL</name>
<organism>
    <name type="scientific">Geobacter sulfurreducens (strain ATCC 51573 / DSM 12127 / PCA)</name>
    <dbReference type="NCBI Taxonomy" id="243231"/>
    <lineage>
        <taxon>Bacteria</taxon>
        <taxon>Pseudomonadati</taxon>
        <taxon>Thermodesulfobacteriota</taxon>
        <taxon>Desulfuromonadia</taxon>
        <taxon>Geobacterales</taxon>
        <taxon>Geobacteraceae</taxon>
        <taxon>Geobacter</taxon>
    </lineage>
</organism>